<reference key="1">
    <citation type="journal article" date="2002" name="J. Bacteriol.">
        <title>Whole-genome comparison of Mycobacterium tuberculosis clinical and laboratory strains.</title>
        <authorList>
            <person name="Fleischmann R.D."/>
            <person name="Alland D."/>
            <person name="Eisen J.A."/>
            <person name="Carpenter L."/>
            <person name="White O."/>
            <person name="Peterson J.D."/>
            <person name="DeBoy R.T."/>
            <person name="Dodson R.J."/>
            <person name="Gwinn M.L."/>
            <person name="Haft D.H."/>
            <person name="Hickey E.K."/>
            <person name="Kolonay J.F."/>
            <person name="Nelson W.C."/>
            <person name="Umayam L.A."/>
            <person name="Ermolaeva M.D."/>
            <person name="Salzberg S.L."/>
            <person name="Delcher A."/>
            <person name="Utterback T.R."/>
            <person name="Weidman J.F."/>
            <person name="Khouri H.M."/>
            <person name="Gill J."/>
            <person name="Mikula A."/>
            <person name="Bishai W."/>
            <person name="Jacobs W.R. Jr."/>
            <person name="Venter J.C."/>
            <person name="Fraser C.M."/>
        </authorList>
    </citation>
    <scope>NUCLEOTIDE SEQUENCE [LARGE SCALE GENOMIC DNA]</scope>
    <source>
        <strain>CDC 1551 / Oshkosh</strain>
    </source>
</reference>
<name>GCS2_MYCTO</name>
<organism>
    <name type="scientific">Mycobacterium tuberculosis (strain CDC 1551 / Oshkosh)</name>
    <dbReference type="NCBI Taxonomy" id="83331"/>
    <lineage>
        <taxon>Bacteria</taxon>
        <taxon>Bacillati</taxon>
        <taxon>Actinomycetota</taxon>
        <taxon>Actinomycetes</taxon>
        <taxon>Mycobacteriales</taxon>
        <taxon>Mycobacteriaceae</taxon>
        <taxon>Mycobacterium</taxon>
        <taxon>Mycobacterium tuberculosis complex</taxon>
    </lineage>
</organism>
<keyword id="KW-0067">ATP-binding</keyword>
<keyword id="KW-0436">Ligase</keyword>
<keyword id="KW-0547">Nucleotide-binding</keyword>
<keyword id="KW-1185">Reference proteome</keyword>
<comment type="function">
    <text evidence="1">ATP-dependent carboxylate-amine ligase which exhibits weak glutamate--cysteine ligase activity.</text>
</comment>
<comment type="catalytic activity">
    <reaction evidence="1">
        <text>L-cysteine + L-glutamate + ATP = gamma-L-glutamyl-L-cysteine + ADP + phosphate + H(+)</text>
        <dbReference type="Rhea" id="RHEA:13285"/>
        <dbReference type="ChEBI" id="CHEBI:15378"/>
        <dbReference type="ChEBI" id="CHEBI:29985"/>
        <dbReference type="ChEBI" id="CHEBI:30616"/>
        <dbReference type="ChEBI" id="CHEBI:35235"/>
        <dbReference type="ChEBI" id="CHEBI:43474"/>
        <dbReference type="ChEBI" id="CHEBI:58173"/>
        <dbReference type="ChEBI" id="CHEBI:456216"/>
        <dbReference type="EC" id="6.3.2.2"/>
    </reaction>
</comment>
<comment type="similarity">
    <text evidence="1">Belongs to the glutamate--cysteine ligase type 2 family. YbdK subfamily.</text>
</comment>
<comment type="sequence caution" evidence="2">
    <conflict type="erroneous initiation">
        <sequence resource="EMBL-CDS" id="AAK44671"/>
    </conflict>
</comment>
<accession>P9WPK8</accession>
<accession>L0T5C8</accession>
<accession>P64693</accession>
<accession>P96279</accession>
<sequence length="376" mass="42295">MPARRSAARIDFAGSPRPTLGVEWEFALVDSQTRDLSNEATAVIAEIGENPRVHKELLRNTVEIVSGICECTAEAMQDLRDTLGPARQIVRDRGMELFCAGTHPFARWSAQKLTDAPRYAELIKRTQWWGRQMLIWGVHVHVGIRSAHKVMPIMTSLLNYYPHLLALSASSPWWGGEDTGYASNRAMMFQQLPTAGLPFHFQRWAEFEGFVYDQKKTGIIDHMDEIRWDIRPSPHLGTLEVRICDGVSNLRELGALVALTHCLIVDLDRRLDAGETLPTMPPWHVQENKWRAARYGLDAVIILDADSNERLVTDDLADVLTRLEPVAKSLNCADELAAVSDIYRDGASYQRQLRVAQQHDGDLRAVVDALVAELVI</sequence>
<evidence type="ECO:0000255" key="1">
    <source>
        <dbReference type="HAMAP-Rule" id="MF_01609"/>
    </source>
</evidence>
<evidence type="ECO:0000305" key="2"/>
<proteinExistence type="inferred from homology"/>
<dbReference type="EC" id="6.3.2.2" evidence="1"/>
<dbReference type="EMBL" id="AE000516">
    <property type="protein sequence ID" value="AAK44671.1"/>
    <property type="status" value="ALT_INIT"/>
    <property type="molecule type" value="Genomic_DNA"/>
</dbReference>
<dbReference type="PIR" id="G70631">
    <property type="entry name" value="G70631"/>
</dbReference>
<dbReference type="RefSeq" id="WP_003900145.1">
    <property type="nucleotide sequence ID" value="NZ_KK341227.1"/>
</dbReference>
<dbReference type="SMR" id="P9WPK8"/>
<dbReference type="KEGG" id="mtc:MT0448"/>
<dbReference type="PATRIC" id="fig|83331.31.peg.476"/>
<dbReference type="HOGENOM" id="CLU_044848_1_0_11"/>
<dbReference type="Proteomes" id="UP000001020">
    <property type="component" value="Chromosome"/>
</dbReference>
<dbReference type="GO" id="GO:0005524">
    <property type="term" value="F:ATP binding"/>
    <property type="evidence" value="ECO:0007669"/>
    <property type="project" value="UniProtKB-KW"/>
</dbReference>
<dbReference type="GO" id="GO:0004357">
    <property type="term" value="F:glutamate-cysteine ligase activity"/>
    <property type="evidence" value="ECO:0007669"/>
    <property type="project" value="UniProtKB-EC"/>
</dbReference>
<dbReference type="GO" id="GO:0042398">
    <property type="term" value="P:modified amino acid biosynthetic process"/>
    <property type="evidence" value="ECO:0007669"/>
    <property type="project" value="InterPro"/>
</dbReference>
<dbReference type="FunFam" id="3.30.590.20:FF:000004">
    <property type="entry name" value="Putative glutamate--cysteine ligase 2"/>
    <property type="match status" value="1"/>
</dbReference>
<dbReference type="Gene3D" id="3.30.590.20">
    <property type="match status" value="1"/>
</dbReference>
<dbReference type="HAMAP" id="MF_01609">
    <property type="entry name" value="Glu_cys_ligase_2"/>
    <property type="match status" value="1"/>
</dbReference>
<dbReference type="InterPro" id="IPR050141">
    <property type="entry name" value="GCL_type2/YbdK_subfam"/>
</dbReference>
<dbReference type="InterPro" id="IPR006336">
    <property type="entry name" value="GCS2"/>
</dbReference>
<dbReference type="InterPro" id="IPR014746">
    <property type="entry name" value="Gln_synth/guanido_kin_cat_dom"/>
</dbReference>
<dbReference type="InterPro" id="IPR011793">
    <property type="entry name" value="YbdK"/>
</dbReference>
<dbReference type="NCBIfam" id="TIGR02050">
    <property type="entry name" value="gshA_cyan_rel"/>
    <property type="match status" value="1"/>
</dbReference>
<dbReference type="NCBIfam" id="NF010042">
    <property type="entry name" value="PRK13517.1-2"/>
    <property type="match status" value="1"/>
</dbReference>
<dbReference type="NCBIfam" id="NF010043">
    <property type="entry name" value="PRK13517.1-3"/>
    <property type="match status" value="1"/>
</dbReference>
<dbReference type="NCBIfam" id="NF010044">
    <property type="entry name" value="PRK13517.1-4"/>
    <property type="match status" value="1"/>
</dbReference>
<dbReference type="PANTHER" id="PTHR36510">
    <property type="entry name" value="GLUTAMATE--CYSTEINE LIGASE 2-RELATED"/>
    <property type="match status" value="1"/>
</dbReference>
<dbReference type="PANTHER" id="PTHR36510:SF1">
    <property type="entry name" value="GLUTAMATE--CYSTEINE LIGASE 2-RELATED"/>
    <property type="match status" value="1"/>
</dbReference>
<dbReference type="Pfam" id="PF04107">
    <property type="entry name" value="GCS2"/>
    <property type="match status" value="1"/>
</dbReference>
<dbReference type="SUPFAM" id="SSF55931">
    <property type="entry name" value="Glutamine synthetase/guanido kinase"/>
    <property type="match status" value="1"/>
</dbReference>
<feature type="chain" id="PRO_0000426934" description="Putative glutamate--cysteine ligase 2">
    <location>
        <begin position="1"/>
        <end position="376"/>
    </location>
</feature>
<protein>
    <recommendedName>
        <fullName evidence="1">Putative glutamate--cysteine ligase 2</fullName>
        <ecNumber evidence="1">6.3.2.2</ecNumber>
    </recommendedName>
    <alternativeName>
        <fullName evidence="1">Gamma-glutamylcysteine synthetase 2</fullName>
        <shortName evidence="1">GCS 2</shortName>
        <shortName evidence="1">Gamma-GCS 2</shortName>
    </alternativeName>
</protein>
<gene>
    <name type="ordered locus">MT0448</name>
</gene>